<comment type="function">
    <text evidence="1">Transcriptional factor involved in regulation of membrane lipid biosynthesis by repressing genes involved in fatty acid and phospholipid metabolism.</text>
</comment>
<comment type="similarity">
    <text evidence="1">Belongs to the FapR family.</text>
</comment>
<reference key="1">
    <citation type="submission" date="2008-01" db="EMBL/GenBank/DDBJ databases">
        <title>Complete sequence of Thermoanaerobacter pseudethanolicus 39E.</title>
        <authorList>
            <person name="Copeland A."/>
            <person name="Lucas S."/>
            <person name="Lapidus A."/>
            <person name="Barry K."/>
            <person name="Glavina del Rio T."/>
            <person name="Dalin E."/>
            <person name="Tice H."/>
            <person name="Pitluck S."/>
            <person name="Bruce D."/>
            <person name="Goodwin L."/>
            <person name="Saunders E."/>
            <person name="Brettin T."/>
            <person name="Detter J.C."/>
            <person name="Han C."/>
            <person name="Schmutz J."/>
            <person name="Larimer F."/>
            <person name="Land M."/>
            <person name="Hauser L."/>
            <person name="Kyrpides N."/>
            <person name="Lykidis A."/>
            <person name="Hemme C."/>
            <person name="Fields M.W."/>
            <person name="He Z."/>
            <person name="Zhou J."/>
            <person name="Richardson P."/>
        </authorList>
    </citation>
    <scope>NUCLEOTIDE SEQUENCE [LARGE SCALE GENOMIC DNA]</scope>
    <source>
        <strain>ATCC 33223 / DSM 2355 / 39E</strain>
    </source>
</reference>
<organism>
    <name type="scientific">Thermoanaerobacter pseudethanolicus (strain ATCC 33223 / 39E)</name>
    <name type="common">Clostridium thermohydrosulfuricum</name>
    <dbReference type="NCBI Taxonomy" id="340099"/>
    <lineage>
        <taxon>Bacteria</taxon>
        <taxon>Bacillati</taxon>
        <taxon>Bacillota</taxon>
        <taxon>Clostridia</taxon>
        <taxon>Thermoanaerobacterales</taxon>
        <taxon>Thermoanaerobacteraceae</taxon>
        <taxon>Thermoanaerobacter</taxon>
    </lineage>
</organism>
<proteinExistence type="inferred from homology"/>
<keyword id="KW-0238">DNA-binding</keyword>
<keyword id="KW-0275">Fatty acid biosynthesis</keyword>
<keyword id="KW-0276">Fatty acid metabolism</keyword>
<keyword id="KW-0444">Lipid biosynthesis</keyword>
<keyword id="KW-0443">Lipid metabolism</keyword>
<keyword id="KW-1185">Reference proteome</keyword>
<keyword id="KW-0678">Repressor</keyword>
<keyword id="KW-0804">Transcription</keyword>
<keyword id="KW-0805">Transcription regulation</keyword>
<evidence type="ECO:0000255" key="1">
    <source>
        <dbReference type="HAMAP-Rule" id="MF_01814"/>
    </source>
</evidence>
<name>FAPR_THEP3</name>
<protein>
    <recommendedName>
        <fullName evidence="1">Transcription factor FapR</fullName>
    </recommendedName>
    <alternativeName>
        <fullName evidence="1">Fatty acid and phospholipid biosynthesis regulator</fullName>
    </alternativeName>
</protein>
<dbReference type="EMBL" id="CP000924">
    <property type="protein sequence ID" value="ABY94946.1"/>
    <property type="molecule type" value="Genomic_DNA"/>
</dbReference>
<dbReference type="RefSeq" id="WP_003869201.1">
    <property type="nucleotide sequence ID" value="NC_010321.1"/>
</dbReference>
<dbReference type="SMR" id="B0K9Y3"/>
<dbReference type="STRING" id="340099.Teth39_1292"/>
<dbReference type="KEGG" id="tpd:Teth39_1292"/>
<dbReference type="eggNOG" id="COG2030">
    <property type="taxonomic scope" value="Bacteria"/>
</dbReference>
<dbReference type="HOGENOM" id="CLU_095708_0_0_9"/>
<dbReference type="Proteomes" id="UP000002156">
    <property type="component" value="Chromosome"/>
</dbReference>
<dbReference type="GO" id="GO:0003677">
    <property type="term" value="F:DNA binding"/>
    <property type="evidence" value="ECO:0007669"/>
    <property type="project" value="UniProtKB-KW"/>
</dbReference>
<dbReference type="GO" id="GO:0003700">
    <property type="term" value="F:DNA-binding transcription factor activity"/>
    <property type="evidence" value="ECO:0007669"/>
    <property type="project" value="UniProtKB-UniRule"/>
</dbReference>
<dbReference type="GO" id="GO:0006633">
    <property type="term" value="P:fatty acid biosynthetic process"/>
    <property type="evidence" value="ECO:0007669"/>
    <property type="project" value="UniProtKB-KW"/>
</dbReference>
<dbReference type="GO" id="GO:0045892">
    <property type="term" value="P:negative regulation of DNA-templated transcription"/>
    <property type="evidence" value="ECO:0007669"/>
    <property type="project" value="UniProtKB-UniRule"/>
</dbReference>
<dbReference type="GO" id="GO:0045717">
    <property type="term" value="P:negative regulation of fatty acid biosynthetic process"/>
    <property type="evidence" value="ECO:0007669"/>
    <property type="project" value="UniProtKB-UniRule"/>
</dbReference>
<dbReference type="CDD" id="cd03440">
    <property type="entry name" value="hot_dog"/>
    <property type="match status" value="1"/>
</dbReference>
<dbReference type="Gene3D" id="3.10.129.10">
    <property type="entry name" value="Hotdog Thioesterase"/>
    <property type="match status" value="1"/>
</dbReference>
<dbReference type="Gene3D" id="1.10.10.10">
    <property type="entry name" value="Winged helix-like DNA-binding domain superfamily/Winged helix DNA-binding domain"/>
    <property type="match status" value="1"/>
</dbReference>
<dbReference type="HAMAP" id="MF_01814">
    <property type="entry name" value="Transcrip_fact_FapR"/>
    <property type="match status" value="1"/>
</dbReference>
<dbReference type="InterPro" id="IPR029069">
    <property type="entry name" value="HotDog_dom_sf"/>
</dbReference>
<dbReference type="InterPro" id="IPR006683">
    <property type="entry name" value="Thioestr_dom"/>
</dbReference>
<dbReference type="InterPro" id="IPR017275">
    <property type="entry name" value="Transcription_factor_FapR"/>
</dbReference>
<dbReference type="InterPro" id="IPR036388">
    <property type="entry name" value="WH-like_DNA-bd_sf"/>
</dbReference>
<dbReference type="InterPro" id="IPR036390">
    <property type="entry name" value="WH_DNA-bd_sf"/>
</dbReference>
<dbReference type="NCBIfam" id="NF003359">
    <property type="entry name" value="PRK04424.1"/>
    <property type="match status" value="1"/>
</dbReference>
<dbReference type="Pfam" id="PF03061">
    <property type="entry name" value="4HBT"/>
    <property type="match status" value="1"/>
</dbReference>
<dbReference type="PIRSF" id="PIRSF037733">
    <property type="entry name" value="Transcription_factor_FapR"/>
    <property type="match status" value="1"/>
</dbReference>
<dbReference type="SUPFAM" id="SSF54637">
    <property type="entry name" value="Thioesterase/thiol ester dehydrase-isomerase"/>
    <property type="match status" value="1"/>
</dbReference>
<dbReference type="SUPFAM" id="SSF46785">
    <property type="entry name" value="Winged helix' DNA-binding domain"/>
    <property type="match status" value="1"/>
</dbReference>
<feature type="chain" id="PRO_1000187836" description="Transcription factor FapR">
    <location>
        <begin position="1"/>
        <end position="200"/>
    </location>
</feature>
<accession>B0K9Y3</accession>
<sequence>MAVRMSKVERQRLLKEKINTNPFYTDDELAEMFGVSVQTIRLDRMELGIPEVRERIKSVAEENYQKVRTITGTEVVGELIDLELGKRGISIFEPTEDMVFVKTKIVKGQYIYSQAESLAMSVIDASAALIGVANIKYKFPVKVGDRLVAKAEVIRQRGNKYFVWVKIKVKDKEVFRGKFILVAIDEDFLKKRSDTVEVSN</sequence>
<gene>
    <name evidence="1" type="primary">fapR</name>
    <name type="ordered locus">Teth39_1292</name>
</gene>